<accession>Q9CG19</accession>
<accession>O50644</accession>
<name>GADC_LACLA</name>
<protein>
    <recommendedName>
        <fullName evidence="1">Glutamate/gamma-aminobutyrate antiporter</fullName>
        <shortName evidence="1">Glu/GABA antiporter</shortName>
    </recommendedName>
</protein>
<evidence type="ECO:0000250" key="1">
    <source>
        <dbReference type="UniProtKB" id="P63235"/>
    </source>
</evidence>
<evidence type="ECO:0000255" key="2"/>
<evidence type="ECO:0000305" key="3"/>
<dbReference type="EMBL" id="AE005176">
    <property type="protein sequence ID" value="AAK05389.1"/>
    <property type="molecule type" value="Genomic_DNA"/>
</dbReference>
<dbReference type="EMBL" id="AB010789">
    <property type="protein sequence ID" value="BAA24584.1"/>
    <property type="molecule type" value="Genomic_DNA"/>
</dbReference>
<dbReference type="PIR" id="C86786">
    <property type="entry name" value="C86786"/>
</dbReference>
<dbReference type="RefSeq" id="NP_267447.1">
    <property type="nucleotide sequence ID" value="NC_002662.1"/>
</dbReference>
<dbReference type="RefSeq" id="WP_010905871.1">
    <property type="nucleotide sequence ID" value="NC_002662.1"/>
</dbReference>
<dbReference type="SMR" id="Q9CG19"/>
<dbReference type="PaxDb" id="272623-L125001"/>
<dbReference type="EnsemblBacteria" id="AAK05389">
    <property type="protein sequence ID" value="AAK05389"/>
    <property type="gene ID" value="L125001"/>
</dbReference>
<dbReference type="GeneID" id="89633496"/>
<dbReference type="KEGG" id="lla:L125001"/>
<dbReference type="PATRIC" id="fig|272623.7.peg.1394"/>
<dbReference type="eggNOG" id="COG0531">
    <property type="taxonomic scope" value="Bacteria"/>
</dbReference>
<dbReference type="HOGENOM" id="CLU_020854_4_0_9"/>
<dbReference type="OrthoDB" id="9791588at2"/>
<dbReference type="Proteomes" id="UP000002196">
    <property type="component" value="Chromosome"/>
</dbReference>
<dbReference type="GO" id="GO:0005886">
    <property type="term" value="C:plasma membrane"/>
    <property type="evidence" value="ECO:0007669"/>
    <property type="project" value="UniProtKB-SubCell"/>
</dbReference>
<dbReference type="GO" id="GO:0015297">
    <property type="term" value="F:antiporter activity"/>
    <property type="evidence" value="ECO:0007669"/>
    <property type="project" value="UniProtKB-KW"/>
</dbReference>
<dbReference type="GO" id="GO:0006865">
    <property type="term" value="P:amino acid transport"/>
    <property type="evidence" value="ECO:0007669"/>
    <property type="project" value="UniProtKB-KW"/>
</dbReference>
<dbReference type="Gene3D" id="1.20.1740.10">
    <property type="entry name" value="Amino acid/polyamine transporter I"/>
    <property type="match status" value="1"/>
</dbReference>
<dbReference type="InterPro" id="IPR002293">
    <property type="entry name" value="AA/rel_permease1"/>
</dbReference>
<dbReference type="InterPro" id="IPR050367">
    <property type="entry name" value="APC_superfamily"/>
</dbReference>
<dbReference type="InterPro" id="IPR004759">
    <property type="entry name" value="Glu_antiport"/>
</dbReference>
<dbReference type="NCBIfam" id="TIGR00910">
    <property type="entry name" value="2A0307_GadC"/>
    <property type="match status" value="1"/>
</dbReference>
<dbReference type="PANTHER" id="PTHR42770">
    <property type="entry name" value="AMINO ACID TRANSPORTER-RELATED"/>
    <property type="match status" value="1"/>
</dbReference>
<dbReference type="PANTHER" id="PTHR42770:SF15">
    <property type="entry name" value="GLUTAMATE_GAMMA-AMINOBUTYRATE ANTIPORTER-RELATED"/>
    <property type="match status" value="1"/>
</dbReference>
<dbReference type="Pfam" id="PF13520">
    <property type="entry name" value="AA_permease_2"/>
    <property type="match status" value="1"/>
</dbReference>
<dbReference type="PIRSF" id="PIRSF006060">
    <property type="entry name" value="AA_transporter"/>
    <property type="match status" value="1"/>
</dbReference>
<feature type="chain" id="PRO_0000213038" description="Glutamate/gamma-aminobutyrate antiporter">
    <location>
        <begin position="1"/>
        <end position="503"/>
    </location>
</feature>
<feature type="transmembrane region" description="Helical" evidence="2">
    <location>
        <begin position="35"/>
        <end position="55"/>
    </location>
</feature>
<feature type="transmembrane region" description="Helical" evidence="2">
    <location>
        <begin position="153"/>
        <end position="173"/>
    </location>
</feature>
<feature type="transmembrane region" description="Helical" evidence="2">
    <location>
        <begin position="194"/>
        <end position="214"/>
    </location>
</feature>
<feature type="transmembrane region" description="Helical" evidence="2">
    <location>
        <begin position="232"/>
        <end position="252"/>
    </location>
</feature>
<feature type="transmembrane region" description="Helical" evidence="2">
    <location>
        <begin position="366"/>
        <end position="386"/>
    </location>
</feature>
<feature type="transmembrane region" description="Helical" evidence="2">
    <location>
        <begin position="407"/>
        <end position="427"/>
    </location>
</feature>
<feature type="transmembrane region" description="Helical" evidence="2">
    <location>
        <begin position="440"/>
        <end position="460"/>
    </location>
</feature>
<feature type="binding site" evidence="2">
    <location>
        <begin position="33"/>
        <end position="43"/>
    </location>
    <ligand>
        <name>L-glutamate</name>
        <dbReference type="ChEBI" id="CHEBI:29985"/>
    </ligand>
</feature>
<feature type="sequence conflict" description="In Ref. 2." evidence="3" ref="2">
    <original>EASASHINELE</original>
    <variation>KLQLRTLMNLQ</variation>
    <location>
        <begin position="211"/>
        <end position="221"/>
    </location>
</feature>
<organism>
    <name type="scientific">Lactococcus lactis subsp. lactis (strain IL1403)</name>
    <name type="common">Streptococcus lactis</name>
    <dbReference type="NCBI Taxonomy" id="272623"/>
    <lineage>
        <taxon>Bacteria</taxon>
        <taxon>Bacillati</taxon>
        <taxon>Bacillota</taxon>
        <taxon>Bacilli</taxon>
        <taxon>Lactobacillales</taxon>
        <taxon>Streptococcaceae</taxon>
        <taxon>Lactococcus</taxon>
    </lineage>
</organism>
<proteinExistence type="inferred from homology"/>
<keyword id="KW-0029">Amino-acid transport</keyword>
<keyword id="KW-0050">Antiport</keyword>
<keyword id="KW-1003">Cell membrane</keyword>
<keyword id="KW-0472">Membrane</keyword>
<keyword id="KW-1185">Reference proteome</keyword>
<keyword id="KW-0812">Transmembrane</keyword>
<keyword id="KW-1133">Transmembrane helix</keyword>
<keyword id="KW-0813">Transport</keyword>
<gene>
    <name type="primary">gadC</name>
    <name type="ordered locus">LL1291</name>
    <name type="ORF">L125001</name>
</gene>
<sequence>MNQKKISLFGFFALTASMVLTVYEYPTFATSKLHLVFFLLLGGLLWFLPVALCAAEMATVEGWKNGGIFSWVSQTLGERFGFAAIFFQWFQITVGFVTMIYFILGALSYVLNFQALNTDPLIKFIGLLIIFWGLTFSQLGGTQRTAKLVKAGFVVGIVIPSIILFGLAAAYFIGGNPIEIPINKHAFVPDFSQVSTLVVFVSFILAYMGVEASASHINELENPKRNYPLAMILLVILAISLDAIGGFSVAAVIPQKDLSLSAGVIQTFQTLILHFNHHLGWLVKVIALMIAFGVMGEVSSWVVGPSRGMFAAAQRGLLPKFLRKTNTHEVPVPLVMIQGIIVTLWGAVLTFGGGGNNLSFLVAISLTVVIYLVGYLLFFIGYFVLIYKKQNLKRTYNVPGKRVGKTIIAGIGFLLSIFALFISFVPPASIAKNETHTYQMILLISFVVTAILPFIVYELHDKRGHDTIEEPRHFKARDVNPAIYPAARGEHHIIKKEEHILKH</sequence>
<comment type="function">
    <text evidence="1">Involved in glutaminase-dependent acid resistance. Exchanges extracellular glutamate (Glu) for intracellular gamma-aminobutyric acid (GABA) under acidic conditions.</text>
</comment>
<comment type="catalytic activity">
    <reaction evidence="1">
        <text>4-aminobutanoate(in) + L-glutamate(out) = 4-aminobutanoate(out) + L-glutamate(in)</text>
        <dbReference type="Rhea" id="RHEA:28919"/>
        <dbReference type="ChEBI" id="CHEBI:29985"/>
        <dbReference type="ChEBI" id="CHEBI:59888"/>
    </reaction>
</comment>
<comment type="subcellular location">
    <subcellularLocation>
        <location evidence="3">Cell membrane</location>
        <topology evidence="1">Multi-pass membrane protein</topology>
    </subcellularLocation>
</comment>
<comment type="similarity">
    <text evidence="3">Belongs to the amino acid-polyamine-organocation (APC) superfamily. Glutamate:GABA antiporter (GGA) (TC 2.A.3.7) family.</text>
</comment>
<reference key="1">
    <citation type="journal article" date="2001" name="Genome Res.">
        <title>The complete genome sequence of the lactic acid bacterium Lactococcus lactis ssp. lactis IL1403.</title>
        <authorList>
            <person name="Bolotin A."/>
            <person name="Wincker P."/>
            <person name="Mauger S."/>
            <person name="Jaillon O."/>
            <person name="Malarme K."/>
            <person name="Weissenbach J."/>
            <person name="Ehrlich S.D."/>
            <person name="Sorokin A."/>
        </authorList>
    </citation>
    <scope>NUCLEOTIDE SEQUENCE [LARGE SCALE GENOMIC DNA]</scope>
    <source>
        <strain>IL1403</strain>
    </source>
</reference>
<reference key="2">
    <citation type="journal article" date="1999" name="Microbiology">
        <title>Lactococcus lactis contains only one glutamate decarboxylase gene.</title>
        <authorList>
            <person name="Nomura M."/>
            <person name="Nakajima I."/>
            <person name="Fujita Y."/>
            <person name="Kobayashi M."/>
            <person name="Kimoto H."/>
            <person name="Suzuki I."/>
            <person name="Aso H."/>
        </authorList>
    </citation>
    <scope>NUCLEOTIDE SEQUENCE [GENOMIC DNA] OF 211-503</scope>
    <source>
        <strain>01-7</strain>
    </source>
</reference>